<comment type="function">
    <text evidence="1">In elementary bodies (EBs, the infectious stage, which is able to survive outside the host cell) provides the structural integrity of the outer envelope through disulfide cross-links with the small cysteine-rich protein and the major outer membrane porin. It has been described in publications as the Sarkosyl-insoluble COMC (Chlamydia outer membrane complex), and serves as the functional equivalent of peptidoglycan. It is present but the disulfide bonds are reduced in reticulate bodies (RBs) (By similarity).</text>
</comment>
<comment type="subunit">
    <text evidence="1">Part of a disulfide cross-linked outer membrane complex (COMC) composed of the major outer membrane porin (MOMP), the small cysteine-rich protein (OmcA) and the large cysteine-rich periplasmic protein (OmcB).</text>
</comment>
<comment type="subcellular location">
    <subcellularLocation>
        <location evidence="4">Periplasm</location>
    </subcellularLocation>
</comment>
<comment type="caution">
    <text evidence="4">Was thought to be an outer membrane protein as it is part of a disulfide cross-linked complex that is insoluble in the detergent Sarkosyl; however based on experiments in C.psittaci it is likely to be periplasmic.</text>
</comment>
<gene>
    <name type="primary">omcB</name>
    <name type="synonym">ompA</name>
</gene>
<proteinExistence type="inferred from homology"/>
<evidence type="ECO:0000250" key="1"/>
<evidence type="ECO:0000255" key="2"/>
<evidence type="ECO:0000256" key="3">
    <source>
        <dbReference type="SAM" id="MobiDB-lite"/>
    </source>
</evidence>
<evidence type="ECO:0000305" key="4"/>
<feature type="signal peptide" evidence="2">
    <location>
        <begin position="1"/>
        <end position="22"/>
    </location>
</feature>
<feature type="propeptide" id="PRO_0000248873" evidence="2">
    <location>
        <begin position="23"/>
        <end position="40"/>
    </location>
</feature>
<feature type="chain" id="PRO_0000248874" description="Large cysteine-rich periplasmic protein OmcB, serovars D/H/G/K">
    <location>
        <begin position="41"/>
        <end position="547"/>
    </location>
</feature>
<feature type="region of interest" description="Disordered" evidence="3">
    <location>
        <begin position="45"/>
        <end position="84"/>
    </location>
</feature>
<feature type="compositionally biased region" description="Basic residues" evidence="3">
    <location>
        <begin position="52"/>
        <end position="61"/>
    </location>
</feature>
<feature type="compositionally biased region" description="Basic and acidic residues" evidence="3">
    <location>
        <begin position="62"/>
        <end position="79"/>
    </location>
</feature>
<organism>
    <name type="scientific">Chlamydia trachomatis</name>
    <dbReference type="NCBI Taxonomy" id="813"/>
    <lineage>
        <taxon>Bacteria</taxon>
        <taxon>Pseudomonadati</taxon>
        <taxon>Chlamydiota</taxon>
        <taxon>Chlamydiia</taxon>
        <taxon>Chlamydiales</taxon>
        <taxon>Chlamydiaceae</taxon>
        <taxon>Chlamydia/Chlamydophila group</taxon>
        <taxon>Chlamydia</taxon>
    </lineage>
</organism>
<name>OMCBH_CHLTH</name>
<accession>Q548P6</accession>
<reference key="1">
    <citation type="journal article" date="2001" name="J. Bacteriol.">
        <title>Recombination in the ompA gene but not the omcB gene of Chlamydia contributes to serovar-specific differences in tissue tropism, immune surveillance, and persistence of the organism.</title>
        <authorList>
            <person name="Millman K.L."/>
            <person name="Tavare S."/>
            <person name="Dean D."/>
        </authorList>
    </citation>
    <scope>NUCLEOTIDE SEQUENCE [GENOMIC DNA]</scope>
    <source>
        <strain>D/UW-3</strain>
        <strain>G/UW-57</strain>
        <strain>H/UW-4</strain>
        <strain>K/UW-31</strain>
    </source>
</reference>
<keyword id="KW-0133">Cell shape</keyword>
<keyword id="KW-1015">Disulfide bond</keyword>
<keyword id="KW-0574">Periplasm</keyword>
<keyword id="KW-0732">Signal</keyword>
<protein>
    <recommendedName>
        <fullName>Large cysteine-rich periplasmic protein OmcB, serovars D/H/G/K</fullName>
        <shortName>Large-CRP</shortName>
    </recommendedName>
    <alternativeName>
        <fullName>60 kDa CRP</fullName>
    </alternativeName>
    <alternativeName>
        <fullName>60 kDa outer membrane protein</fullName>
    </alternativeName>
    <alternativeName>
        <fullName>Cysteine-rich outer membrane protein</fullName>
    </alternativeName>
</protein>
<dbReference type="EMBL" id="AF304327">
    <property type="protein sequence ID" value="AAL14097.1"/>
    <property type="molecule type" value="Genomic_DNA"/>
</dbReference>
<dbReference type="EMBL" id="AF304328">
    <property type="protein sequence ID" value="AAL14098.1"/>
    <property type="molecule type" value="Genomic_DNA"/>
</dbReference>
<dbReference type="EMBL" id="AF304331">
    <property type="protein sequence ID" value="AAL14101.1"/>
    <property type="molecule type" value="Genomic_DNA"/>
</dbReference>
<dbReference type="EMBL" id="AF304326">
    <property type="protein sequence ID" value="AAL14096.1"/>
    <property type="molecule type" value="Genomic_DNA"/>
</dbReference>
<dbReference type="RefSeq" id="WP_009872660.1">
    <property type="nucleotide sequence ID" value="NZ_CP156065.1"/>
</dbReference>
<dbReference type="GO" id="GO:0042597">
    <property type="term" value="C:periplasmic space"/>
    <property type="evidence" value="ECO:0007669"/>
    <property type="project" value="UniProtKB-SubCell"/>
</dbReference>
<dbReference type="GO" id="GO:0005201">
    <property type="term" value="F:extracellular matrix structural constituent"/>
    <property type="evidence" value="ECO:0007669"/>
    <property type="project" value="InterPro"/>
</dbReference>
<dbReference type="GO" id="GO:0008360">
    <property type="term" value="P:regulation of cell shape"/>
    <property type="evidence" value="ECO:0007669"/>
    <property type="project" value="UniProtKB-KW"/>
</dbReference>
<dbReference type="Gene3D" id="2.60.40.10">
    <property type="entry name" value="Immunoglobulins"/>
    <property type="match status" value="1"/>
</dbReference>
<dbReference type="InterPro" id="IPR003506">
    <property type="entry name" value="Chlam_OMP6"/>
</dbReference>
<dbReference type="InterPro" id="IPR051172">
    <property type="entry name" value="Chlamydia_OmcB"/>
</dbReference>
<dbReference type="InterPro" id="IPR047589">
    <property type="entry name" value="DUF11_rpt"/>
</dbReference>
<dbReference type="InterPro" id="IPR013783">
    <property type="entry name" value="Ig-like_fold"/>
</dbReference>
<dbReference type="InterPro" id="IPR001434">
    <property type="entry name" value="OmcB-like_DUF11"/>
</dbReference>
<dbReference type="NCBIfam" id="TIGR01451">
    <property type="entry name" value="B_ant_repeat"/>
    <property type="match status" value="1"/>
</dbReference>
<dbReference type="PANTHER" id="PTHR34819">
    <property type="entry name" value="LARGE CYSTEINE-RICH PERIPLASMIC PROTEIN OMCB"/>
    <property type="match status" value="1"/>
</dbReference>
<dbReference type="PANTHER" id="PTHR34819:SF4">
    <property type="entry name" value="LARGE CYSTEINE-RICH PERIPLASMIC PROTEIN OMCB"/>
    <property type="match status" value="1"/>
</dbReference>
<dbReference type="Pfam" id="PF03504">
    <property type="entry name" value="Chlam_OMP6"/>
    <property type="match status" value="1"/>
</dbReference>
<dbReference type="Pfam" id="PF01345">
    <property type="entry name" value="DUF11"/>
    <property type="match status" value="3"/>
</dbReference>
<dbReference type="PRINTS" id="PR01336">
    <property type="entry name" value="CHLAMIDIAOM6"/>
</dbReference>
<sequence length="547" mass="58694">MNKLIRRAVTIFAVTSVASLFASGVLETSMAESLSTNVISLADTKAKDNTSHKSKKARKNHSKETPVDRKEVAPVHESKATGPKQDSCFGRMYTVKVNDDRNVEITQAVPEYATVGSPYPIEITATGKRDCVDVIITQQLPCEAEFVRSDPATTPTADGKLVWKIDRLGQGEKSKITVWVKPLKEGCCFTAATVCACPEIRSVTKCGQPAICVKQEGPENACLRCPVVYKINIVNQGTATARNVVVENPVPDGYAHSSGQRVLTFTLGDMQPGEHRTITVEFCPLKRGRATNIATVSYCGGHKNTASVTTVINEPCVQVSIAGADWSYVCKPVEYVISVSNPGDLVLRDVVVEDTLSPGVTVLEAAGAQISCNKVVWTVKELNPGESLQYKVLVRAQTPGQFTNNVVVKSCSDCGTCTSCAEATTYWKGVAATHMCVVDTCDPVCVGENTVYRICVTNRGSAEDTNVSLMLKFSKELQPVSFSGPTKGTITGNTVVFDSLPRLGSKETVEFSVTLKAVSAGDARGEAILSSDTLTVPVSDTENTHIY</sequence>